<organism>
    <name type="scientific">Geobacillus kaustophilus (strain HTA426)</name>
    <dbReference type="NCBI Taxonomy" id="235909"/>
    <lineage>
        <taxon>Bacteria</taxon>
        <taxon>Bacillati</taxon>
        <taxon>Bacillota</taxon>
        <taxon>Bacilli</taxon>
        <taxon>Bacillales</taxon>
        <taxon>Anoxybacillaceae</taxon>
        <taxon>Geobacillus</taxon>
        <taxon>Geobacillus thermoleovorans group</taxon>
    </lineage>
</organism>
<name>HUTI_GEOKA</name>
<protein>
    <recommendedName>
        <fullName evidence="1">Imidazolonepropionase</fullName>
        <ecNumber evidence="1">3.5.2.7</ecNumber>
    </recommendedName>
    <alternativeName>
        <fullName evidence="1">Imidazolone-5-propionate hydrolase</fullName>
    </alternativeName>
</protein>
<evidence type="ECO:0000255" key="1">
    <source>
        <dbReference type="HAMAP-Rule" id="MF_00372"/>
    </source>
</evidence>
<comment type="function">
    <text evidence="1">Catalyzes the hydrolytic cleavage of the carbon-nitrogen bond in imidazolone-5-propanoate to yield N-formimidoyl-L-glutamate. It is the third step in the universal histidine degradation pathway.</text>
</comment>
<comment type="catalytic activity">
    <reaction evidence="1">
        <text>4-imidazolone-5-propanoate + H2O = N-formimidoyl-L-glutamate</text>
        <dbReference type="Rhea" id="RHEA:23660"/>
        <dbReference type="ChEBI" id="CHEBI:15377"/>
        <dbReference type="ChEBI" id="CHEBI:58928"/>
        <dbReference type="ChEBI" id="CHEBI:77893"/>
        <dbReference type="EC" id="3.5.2.7"/>
    </reaction>
</comment>
<comment type="cofactor">
    <cofactor evidence="1">
        <name>Zn(2+)</name>
        <dbReference type="ChEBI" id="CHEBI:29105"/>
    </cofactor>
    <cofactor evidence="1">
        <name>Fe(3+)</name>
        <dbReference type="ChEBI" id="CHEBI:29034"/>
    </cofactor>
    <text evidence="1">Binds 1 zinc or iron ion per subunit.</text>
</comment>
<comment type="pathway">
    <text evidence="1">Amino-acid degradation; L-histidine degradation into L-glutamate; N-formimidoyl-L-glutamate from L-histidine: step 3/3.</text>
</comment>
<comment type="subcellular location">
    <subcellularLocation>
        <location evidence="1">Cytoplasm</location>
    </subcellularLocation>
</comment>
<comment type="similarity">
    <text evidence="1">Belongs to the metallo-dependent hydrolases superfamily. HutI family.</text>
</comment>
<sequence length="424" mass="45864">MRPLFVRRARQLVTLAGSSAAPLVKEKMSDLGIIENGSVWIENGTIVAVGPDDELVRRFADRLAEAEVIDAKGKTVTPGLIDPHTHLVYAGSREHEWTMRLHGATYMEIMNAGGGIHATTKATREASEEALYEESKRRLDQFLLHGVTTVEAKSGYGLSLEHEIKQLEIAKRLHDTHPVDIVSTFLGAHAVPPEWKHDPDEYVRLVIDEMIPEVSRRGLAEFNDVFCERGVFTPDQARRMLEAGKASGLTPKIHADEIEPYGGAELAAEVGAISADHLLRASDEGIRRMADGGVIGVLLPGTAFFLMTKAADARRLIDAGVPVALATDCNPGSSPTVSLPLVMSLACLHMGMTPAEAMAAATINAAHAIGRAHLVGSLEPGKKADLVIFNVPNYMQIMYYYGVNHAETVIKGGKVVVNDGKVYI</sequence>
<dbReference type="EC" id="3.5.2.7" evidence="1"/>
<dbReference type="EMBL" id="BA000043">
    <property type="protein sequence ID" value="BAD75653.1"/>
    <property type="molecule type" value="Genomic_DNA"/>
</dbReference>
<dbReference type="RefSeq" id="WP_011230865.1">
    <property type="nucleotide sequence ID" value="NC_006510.1"/>
</dbReference>
<dbReference type="SMR" id="Q5L083"/>
<dbReference type="STRING" id="235909.GK1368"/>
<dbReference type="KEGG" id="gka:GK1368"/>
<dbReference type="PATRIC" id="fig|235909.7.peg.1479"/>
<dbReference type="eggNOG" id="COG1228">
    <property type="taxonomic scope" value="Bacteria"/>
</dbReference>
<dbReference type="HOGENOM" id="CLU_041647_0_1_9"/>
<dbReference type="UniPathway" id="UPA00379">
    <property type="reaction ID" value="UER00551"/>
</dbReference>
<dbReference type="Proteomes" id="UP000001172">
    <property type="component" value="Chromosome"/>
</dbReference>
<dbReference type="GO" id="GO:0005737">
    <property type="term" value="C:cytoplasm"/>
    <property type="evidence" value="ECO:0007669"/>
    <property type="project" value="UniProtKB-SubCell"/>
</dbReference>
<dbReference type="GO" id="GO:0050480">
    <property type="term" value="F:imidazolonepropionase activity"/>
    <property type="evidence" value="ECO:0007669"/>
    <property type="project" value="UniProtKB-UniRule"/>
</dbReference>
<dbReference type="GO" id="GO:0005506">
    <property type="term" value="F:iron ion binding"/>
    <property type="evidence" value="ECO:0007669"/>
    <property type="project" value="UniProtKB-UniRule"/>
</dbReference>
<dbReference type="GO" id="GO:0008270">
    <property type="term" value="F:zinc ion binding"/>
    <property type="evidence" value="ECO:0007669"/>
    <property type="project" value="UniProtKB-UniRule"/>
</dbReference>
<dbReference type="GO" id="GO:0019556">
    <property type="term" value="P:L-histidine catabolic process to glutamate and formamide"/>
    <property type="evidence" value="ECO:0007669"/>
    <property type="project" value="UniProtKB-UniPathway"/>
</dbReference>
<dbReference type="GO" id="GO:0019557">
    <property type="term" value="P:L-histidine catabolic process to glutamate and formate"/>
    <property type="evidence" value="ECO:0007669"/>
    <property type="project" value="UniProtKB-UniPathway"/>
</dbReference>
<dbReference type="CDD" id="cd01296">
    <property type="entry name" value="Imidazolone-5PH"/>
    <property type="match status" value="1"/>
</dbReference>
<dbReference type="FunFam" id="3.20.20.140:FF:000007">
    <property type="entry name" value="Imidazolonepropionase"/>
    <property type="match status" value="1"/>
</dbReference>
<dbReference type="Gene3D" id="3.20.20.140">
    <property type="entry name" value="Metal-dependent hydrolases"/>
    <property type="match status" value="1"/>
</dbReference>
<dbReference type="Gene3D" id="2.30.40.10">
    <property type="entry name" value="Urease, subunit C, domain 1"/>
    <property type="match status" value="1"/>
</dbReference>
<dbReference type="HAMAP" id="MF_00372">
    <property type="entry name" value="HutI"/>
    <property type="match status" value="1"/>
</dbReference>
<dbReference type="InterPro" id="IPR006680">
    <property type="entry name" value="Amidohydro-rel"/>
</dbReference>
<dbReference type="InterPro" id="IPR005920">
    <property type="entry name" value="HutI"/>
</dbReference>
<dbReference type="InterPro" id="IPR011059">
    <property type="entry name" value="Metal-dep_hydrolase_composite"/>
</dbReference>
<dbReference type="InterPro" id="IPR032466">
    <property type="entry name" value="Metal_Hydrolase"/>
</dbReference>
<dbReference type="NCBIfam" id="TIGR01224">
    <property type="entry name" value="hutI"/>
    <property type="match status" value="1"/>
</dbReference>
<dbReference type="PANTHER" id="PTHR42752">
    <property type="entry name" value="IMIDAZOLONEPROPIONASE"/>
    <property type="match status" value="1"/>
</dbReference>
<dbReference type="PANTHER" id="PTHR42752:SF1">
    <property type="entry name" value="IMIDAZOLONEPROPIONASE-RELATED"/>
    <property type="match status" value="1"/>
</dbReference>
<dbReference type="Pfam" id="PF01979">
    <property type="entry name" value="Amidohydro_1"/>
    <property type="match status" value="1"/>
</dbReference>
<dbReference type="SUPFAM" id="SSF51338">
    <property type="entry name" value="Composite domain of metallo-dependent hydrolases"/>
    <property type="match status" value="1"/>
</dbReference>
<dbReference type="SUPFAM" id="SSF51556">
    <property type="entry name" value="Metallo-dependent hydrolases"/>
    <property type="match status" value="1"/>
</dbReference>
<keyword id="KW-0963">Cytoplasm</keyword>
<keyword id="KW-0369">Histidine metabolism</keyword>
<keyword id="KW-0378">Hydrolase</keyword>
<keyword id="KW-0408">Iron</keyword>
<keyword id="KW-0479">Metal-binding</keyword>
<keyword id="KW-1185">Reference proteome</keyword>
<keyword id="KW-0862">Zinc</keyword>
<accession>Q5L083</accession>
<proteinExistence type="inferred from homology"/>
<reference key="1">
    <citation type="journal article" date="2004" name="Nucleic Acids Res.">
        <title>Thermoadaptation trait revealed by the genome sequence of thermophilic Geobacillus kaustophilus.</title>
        <authorList>
            <person name="Takami H."/>
            <person name="Takaki Y."/>
            <person name="Chee G.-J."/>
            <person name="Nishi S."/>
            <person name="Shimamura S."/>
            <person name="Suzuki H."/>
            <person name="Matsui S."/>
            <person name="Uchiyama I."/>
        </authorList>
    </citation>
    <scope>NUCLEOTIDE SEQUENCE [LARGE SCALE GENOMIC DNA]</scope>
    <source>
        <strain>HTA426</strain>
    </source>
</reference>
<gene>
    <name evidence="1" type="primary">hutI</name>
    <name type="ordered locus">GK1368</name>
</gene>
<feature type="chain" id="PRO_0000306461" description="Imidazolonepropionase">
    <location>
        <begin position="1"/>
        <end position="424"/>
    </location>
</feature>
<feature type="binding site" evidence="1">
    <location>
        <position position="84"/>
    </location>
    <ligand>
        <name>Fe(3+)</name>
        <dbReference type="ChEBI" id="CHEBI:29034"/>
    </ligand>
</feature>
<feature type="binding site" evidence="1">
    <location>
        <position position="84"/>
    </location>
    <ligand>
        <name>Zn(2+)</name>
        <dbReference type="ChEBI" id="CHEBI:29105"/>
    </ligand>
</feature>
<feature type="binding site" evidence="1">
    <location>
        <position position="86"/>
    </location>
    <ligand>
        <name>Fe(3+)</name>
        <dbReference type="ChEBI" id="CHEBI:29034"/>
    </ligand>
</feature>
<feature type="binding site" evidence="1">
    <location>
        <position position="86"/>
    </location>
    <ligand>
        <name>Zn(2+)</name>
        <dbReference type="ChEBI" id="CHEBI:29105"/>
    </ligand>
</feature>
<feature type="binding site" evidence="1">
    <location>
        <position position="93"/>
    </location>
    <ligand>
        <name>4-imidazolone-5-propanoate</name>
        <dbReference type="ChEBI" id="CHEBI:77893"/>
    </ligand>
</feature>
<feature type="binding site" evidence="1">
    <location>
        <position position="156"/>
    </location>
    <ligand>
        <name>4-imidazolone-5-propanoate</name>
        <dbReference type="ChEBI" id="CHEBI:77893"/>
    </ligand>
</feature>
<feature type="binding site" evidence="1">
    <location>
        <position position="156"/>
    </location>
    <ligand>
        <name>N-formimidoyl-L-glutamate</name>
        <dbReference type="ChEBI" id="CHEBI:58928"/>
    </ligand>
</feature>
<feature type="binding site" evidence="1">
    <location>
        <position position="189"/>
    </location>
    <ligand>
        <name>4-imidazolone-5-propanoate</name>
        <dbReference type="ChEBI" id="CHEBI:77893"/>
    </ligand>
</feature>
<feature type="binding site" evidence="1">
    <location>
        <position position="254"/>
    </location>
    <ligand>
        <name>Fe(3+)</name>
        <dbReference type="ChEBI" id="CHEBI:29034"/>
    </ligand>
</feature>
<feature type="binding site" evidence="1">
    <location>
        <position position="254"/>
    </location>
    <ligand>
        <name>Zn(2+)</name>
        <dbReference type="ChEBI" id="CHEBI:29105"/>
    </ligand>
</feature>
<feature type="binding site" evidence="1">
    <location>
        <position position="257"/>
    </location>
    <ligand>
        <name>4-imidazolone-5-propanoate</name>
        <dbReference type="ChEBI" id="CHEBI:77893"/>
    </ligand>
</feature>
<feature type="binding site" evidence="1">
    <location>
        <position position="328"/>
    </location>
    <ligand>
        <name>Fe(3+)</name>
        <dbReference type="ChEBI" id="CHEBI:29034"/>
    </ligand>
</feature>
<feature type="binding site" evidence="1">
    <location>
        <position position="328"/>
    </location>
    <ligand>
        <name>Zn(2+)</name>
        <dbReference type="ChEBI" id="CHEBI:29105"/>
    </ligand>
</feature>
<feature type="binding site" evidence="1">
    <location>
        <position position="330"/>
    </location>
    <ligand>
        <name>N-formimidoyl-L-glutamate</name>
        <dbReference type="ChEBI" id="CHEBI:58928"/>
    </ligand>
</feature>
<feature type="binding site" evidence="1">
    <location>
        <position position="332"/>
    </location>
    <ligand>
        <name>N-formimidoyl-L-glutamate</name>
        <dbReference type="ChEBI" id="CHEBI:58928"/>
    </ligand>
</feature>
<feature type="binding site" evidence="1">
    <location>
        <position position="333"/>
    </location>
    <ligand>
        <name>4-imidazolone-5-propanoate</name>
        <dbReference type="ChEBI" id="CHEBI:77893"/>
    </ligand>
</feature>